<proteinExistence type="inferred from homology"/>
<name>IFNAD_BOVIN</name>
<gene>
    <name type="primary">IFNAD</name>
</gene>
<dbReference type="EMBL" id="M10955">
    <property type="protein sequence ID" value="AAA30576.1"/>
    <property type="molecule type" value="Genomic_DNA"/>
</dbReference>
<dbReference type="PIR" id="D26028">
    <property type="entry name" value="IVBOID"/>
</dbReference>
<dbReference type="SMR" id="P05010"/>
<dbReference type="FunCoup" id="P05010">
    <property type="interactions" value="29"/>
</dbReference>
<dbReference type="InParanoid" id="P05010"/>
<dbReference type="Proteomes" id="UP000009136">
    <property type="component" value="Unplaced"/>
</dbReference>
<dbReference type="GO" id="GO:0005615">
    <property type="term" value="C:extracellular space"/>
    <property type="evidence" value="ECO:0000318"/>
    <property type="project" value="GO_Central"/>
</dbReference>
<dbReference type="GO" id="GO:0005125">
    <property type="term" value="F:cytokine activity"/>
    <property type="evidence" value="ECO:0000318"/>
    <property type="project" value="GO_Central"/>
</dbReference>
<dbReference type="GO" id="GO:0005132">
    <property type="term" value="F:type I interferon receptor binding"/>
    <property type="evidence" value="ECO:0000318"/>
    <property type="project" value="GO_Central"/>
</dbReference>
<dbReference type="GO" id="GO:0002250">
    <property type="term" value="P:adaptive immune response"/>
    <property type="evidence" value="ECO:0000318"/>
    <property type="project" value="GO_Central"/>
</dbReference>
<dbReference type="GO" id="GO:0002312">
    <property type="term" value="P:B cell activation involved in immune response"/>
    <property type="evidence" value="ECO:0000318"/>
    <property type="project" value="GO_Central"/>
</dbReference>
<dbReference type="GO" id="GO:0051607">
    <property type="term" value="P:defense response to virus"/>
    <property type="evidence" value="ECO:0007669"/>
    <property type="project" value="UniProtKB-KW"/>
</dbReference>
<dbReference type="GO" id="GO:0006959">
    <property type="term" value="P:humoral immune response"/>
    <property type="evidence" value="ECO:0000318"/>
    <property type="project" value="GO_Central"/>
</dbReference>
<dbReference type="GO" id="GO:0002323">
    <property type="term" value="P:natural killer cell activation involved in immune response"/>
    <property type="evidence" value="ECO:0000318"/>
    <property type="project" value="GO_Central"/>
</dbReference>
<dbReference type="GO" id="GO:0009891">
    <property type="term" value="P:positive regulation of biosynthetic process"/>
    <property type="evidence" value="ECO:0007669"/>
    <property type="project" value="UniProtKB-ARBA"/>
</dbReference>
<dbReference type="GO" id="GO:0043330">
    <property type="term" value="P:response to exogenous dsRNA"/>
    <property type="evidence" value="ECO:0000318"/>
    <property type="project" value="GO_Central"/>
</dbReference>
<dbReference type="GO" id="GO:0002286">
    <property type="term" value="P:T cell activation involved in immune response"/>
    <property type="evidence" value="ECO:0000318"/>
    <property type="project" value="GO_Central"/>
</dbReference>
<dbReference type="GO" id="GO:0060337">
    <property type="term" value="P:type I interferon-mediated signaling pathway"/>
    <property type="evidence" value="ECO:0000318"/>
    <property type="project" value="GO_Central"/>
</dbReference>
<dbReference type="CDD" id="cd00095">
    <property type="entry name" value="IFab"/>
    <property type="match status" value="1"/>
</dbReference>
<dbReference type="FunFam" id="1.20.1250.10:FF:000001">
    <property type="entry name" value="Interferon alpha"/>
    <property type="match status" value="1"/>
</dbReference>
<dbReference type="Gene3D" id="1.20.1250.10">
    <property type="match status" value="1"/>
</dbReference>
<dbReference type="InterPro" id="IPR009079">
    <property type="entry name" value="4_helix_cytokine-like_core"/>
</dbReference>
<dbReference type="InterPro" id="IPR000471">
    <property type="entry name" value="Interferon_alpha/beta/delta"/>
</dbReference>
<dbReference type="PANTHER" id="PTHR11691:SF60">
    <property type="entry name" value="INTERFERON ALPHA-5"/>
    <property type="match status" value="1"/>
</dbReference>
<dbReference type="PANTHER" id="PTHR11691">
    <property type="entry name" value="TYPE I INTERFERON"/>
    <property type="match status" value="1"/>
</dbReference>
<dbReference type="Pfam" id="PF00143">
    <property type="entry name" value="Interferon"/>
    <property type="match status" value="1"/>
</dbReference>
<dbReference type="PRINTS" id="PR00266">
    <property type="entry name" value="INTERFERONAB"/>
</dbReference>
<dbReference type="SMART" id="SM00076">
    <property type="entry name" value="IFabd"/>
    <property type="match status" value="1"/>
</dbReference>
<dbReference type="SUPFAM" id="SSF47266">
    <property type="entry name" value="4-helical cytokines"/>
    <property type="match status" value="1"/>
</dbReference>
<dbReference type="PROSITE" id="PS00252">
    <property type="entry name" value="INTERFERON_A_B_D"/>
    <property type="match status" value="1"/>
</dbReference>
<feature type="signal peptide">
    <location>
        <begin position="1"/>
        <end position="23"/>
    </location>
</feature>
<feature type="chain" id="PRO_0000016388" description="Interferon alpha-D">
    <location>
        <begin position="24"/>
        <end position="189"/>
    </location>
</feature>
<feature type="disulfide bond" evidence="1">
    <location>
        <begin position="24"/>
        <end position="122"/>
    </location>
</feature>
<feature type="disulfide bond" evidence="1">
    <location>
        <begin position="52"/>
        <end position="162"/>
    </location>
</feature>
<protein>
    <recommendedName>
        <fullName>Interferon alpha-D</fullName>
    </recommendedName>
</protein>
<reference key="1">
    <citation type="journal article" date="1985" name="J. Biol. Chem.">
        <title>Bovine interferon alpha genes. Structure and expression.</title>
        <authorList>
            <person name="Velan B."/>
            <person name="Cohen S."/>
            <person name="Grosfeld H."/>
            <person name="Leitner M."/>
            <person name="Shafferman A."/>
        </authorList>
    </citation>
    <scope>NUCLEOTIDE SEQUENCE [GENOMIC DNA]</scope>
</reference>
<comment type="function">
    <text>Produced by macrophages, IFN-alpha have antiviral activities. Interferon stimulates the production of two enzymes: a protein kinase and an oligoadenylate synthetase.</text>
</comment>
<comment type="subcellular location">
    <subcellularLocation>
        <location>Secreted</location>
    </subcellularLocation>
</comment>
<comment type="similarity">
    <text evidence="2">Belongs to the alpha/beta interferon family.</text>
</comment>
<accession>P05010</accession>
<organism>
    <name type="scientific">Bos taurus</name>
    <name type="common">Bovine</name>
    <dbReference type="NCBI Taxonomy" id="9913"/>
    <lineage>
        <taxon>Eukaryota</taxon>
        <taxon>Metazoa</taxon>
        <taxon>Chordata</taxon>
        <taxon>Craniata</taxon>
        <taxon>Vertebrata</taxon>
        <taxon>Euteleostomi</taxon>
        <taxon>Mammalia</taxon>
        <taxon>Eutheria</taxon>
        <taxon>Laurasiatheria</taxon>
        <taxon>Artiodactyla</taxon>
        <taxon>Ruminantia</taxon>
        <taxon>Pecora</taxon>
        <taxon>Bovidae</taxon>
        <taxon>Bovinae</taxon>
        <taxon>Bos</taxon>
    </lineage>
</organism>
<sequence length="189" mass="21318">MAPAWSLLLALLLLSCNAICSLGCHLPHSHSLAKRRVLTLLRQLRRVSPSSCLQDRNDFAFPQEALGGSQLQKAQAISVLHEVTQHTFQLSSTEGSAAVWDESLLDKLRTALDQQLTDLQACLRQEEGLPGAPLLKEDSSLAVRKYFHRLTLYLQEKRHSPCAWEVVRAQVMRAFSSSTNLQERFRRKD</sequence>
<keyword id="KW-0051">Antiviral defense</keyword>
<keyword id="KW-0202">Cytokine</keyword>
<keyword id="KW-1015">Disulfide bond</keyword>
<keyword id="KW-1185">Reference proteome</keyword>
<keyword id="KW-0964">Secreted</keyword>
<keyword id="KW-0732">Signal</keyword>
<evidence type="ECO:0000250" key="1"/>
<evidence type="ECO:0000305" key="2"/>